<organism>
    <name type="scientific">Karelsulcia muelleri (strain GWSS)</name>
    <name type="common">Sulcia muelleri</name>
    <dbReference type="NCBI Taxonomy" id="444179"/>
    <lineage>
        <taxon>Bacteria</taxon>
        <taxon>Pseudomonadati</taxon>
        <taxon>Bacteroidota</taxon>
        <taxon>Flavobacteriia</taxon>
        <taxon>Flavobacteriales</taxon>
        <taxon>Candidatus Karelsulcia</taxon>
    </lineage>
</organism>
<keyword id="KW-0963">Cytoplasm</keyword>
<keyword id="KW-0274">FAD</keyword>
<keyword id="KW-0285">Flavoprotein</keyword>
<keyword id="KW-0520">NAD</keyword>
<keyword id="KW-0819">tRNA processing</keyword>
<name>MNMG_KARMG</name>
<evidence type="ECO:0000255" key="1">
    <source>
        <dbReference type="HAMAP-Rule" id="MF_00129"/>
    </source>
</evidence>
<protein>
    <recommendedName>
        <fullName evidence="1">tRNA uridine 5-carboxymethylaminomethyl modification enzyme MnmG</fullName>
    </recommendedName>
    <alternativeName>
        <fullName evidence="1">Glucose-inhibited division protein A</fullName>
    </alternativeName>
</protein>
<proteinExistence type="inferred from homology"/>
<feature type="chain" id="PRO_0000345341" description="tRNA uridine 5-carboxymethylaminomethyl modification enzyme MnmG">
    <location>
        <begin position="1"/>
        <end position="611"/>
    </location>
</feature>
<feature type="binding site" evidence="1">
    <location>
        <begin position="12"/>
        <end position="17"/>
    </location>
    <ligand>
        <name>FAD</name>
        <dbReference type="ChEBI" id="CHEBI:57692"/>
    </ligand>
</feature>
<feature type="binding site" evidence="1">
    <location>
        <begin position="271"/>
        <end position="285"/>
    </location>
    <ligand>
        <name>NAD(+)</name>
        <dbReference type="ChEBI" id="CHEBI:57540"/>
    </ligand>
</feature>
<dbReference type="EMBL" id="CP000770">
    <property type="protein sequence ID" value="ABS30454.1"/>
    <property type="molecule type" value="Genomic_DNA"/>
</dbReference>
<dbReference type="SMR" id="A8Z5Q4"/>
<dbReference type="STRING" id="444179.SMGWSS_024"/>
<dbReference type="KEGG" id="smg:SMGWSS_024"/>
<dbReference type="HOGENOM" id="CLU_007831_2_2_10"/>
<dbReference type="Proteomes" id="UP000000781">
    <property type="component" value="Chromosome"/>
</dbReference>
<dbReference type="GO" id="GO:0005829">
    <property type="term" value="C:cytosol"/>
    <property type="evidence" value="ECO:0007669"/>
    <property type="project" value="TreeGrafter"/>
</dbReference>
<dbReference type="GO" id="GO:0050660">
    <property type="term" value="F:flavin adenine dinucleotide binding"/>
    <property type="evidence" value="ECO:0007669"/>
    <property type="project" value="UniProtKB-UniRule"/>
</dbReference>
<dbReference type="GO" id="GO:0030488">
    <property type="term" value="P:tRNA methylation"/>
    <property type="evidence" value="ECO:0007669"/>
    <property type="project" value="TreeGrafter"/>
</dbReference>
<dbReference type="GO" id="GO:0002098">
    <property type="term" value="P:tRNA wobble uridine modification"/>
    <property type="evidence" value="ECO:0007669"/>
    <property type="project" value="InterPro"/>
</dbReference>
<dbReference type="FunFam" id="1.10.150.570:FF:000001">
    <property type="entry name" value="tRNA uridine 5-carboxymethylaminomethyl modification enzyme MnmG"/>
    <property type="match status" value="1"/>
</dbReference>
<dbReference type="FunFam" id="3.50.50.60:FF:000002">
    <property type="entry name" value="tRNA uridine 5-carboxymethylaminomethyl modification enzyme MnmG"/>
    <property type="match status" value="1"/>
</dbReference>
<dbReference type="Gene3D" id="3.50.50.60">
    <property type="entry name" value="FAD/NAD(P)-binding domain"/>
    <property type="match status" value="2"/>
</dbReference>
<dbReference type="Gene3D" id="1.10.150.570">
    <property type="entry name" value="GidA associated domain, C-terminal subdomain"/>
    <property type="match status" value="1"/>
</dbReference>
<dbReference type="Gene3D" id="1.10.10.1800">
    <property type="entry name" value="tRNA uridine 5-carboxymethylaminomethyl modification enzyme MnmG/GidA"/>
    <property type="match status" value="1"/>
</dbReference>
<dbReference type="HAMAP" id="MF_00129">
    <property type="entry name" value="MnmG_GidA"/>
    <property type="match status" value="1"/>
</dbReference>
<dbReference type="InterPro" id="IPR036188">
    <property type="entry name" value="FAD/NAD-bd_sf"/>
</dbReference>
<dbReference type="InterPro" id="IPR049312">
    <property type="entry name" value="GIDA_C_N"/>
</dbReference>
<dbReference type="InterPro" id="IPR004416">
    <property type="entry name" value="MnmG"/>
</dbReference>
<dbReference type="InterPro" id="IPR002218">
    <property type="entry name" value="MnmG-rel"/>
</dbReference>
<dbReference type="InterPro" id="IPR020595">
    <property type="entry name" value="MnmG-rel_CS"/>
</dbReference>
<dbReference type="InterPro" id="IPR026904">
    <property type="entry name" value="MnmG_C"/>
</dbReference>
<dbReference type="InterPro" id="IPR047001">
    <property type="entry name" value="MnmG_C_subdom"/>
</dbReference>
<dbReference type="InterPro" id="IPR044920">
    <property type="entry name" value="MnmG_C_subdom_sf"/>
</dbReference>
<dbReference type="InterPro" id="IPR040131">
    <property type="entry name" value="MnmG_N"/>
</dbReference>
<dbReference type="NCBIfam" id="TIGR00136">
    <property type="entry name" value="mnmG_gidA"/>
    <property type="match status" value="1"/>
</dbReference>
<dbReference type="PANTHER" id="PTHR11806">
    <property type="entry name" value="GLUCOSE INHIBITED DIVISION PROTEIN A"/>
    <property type="match status" value="1"/>
</dbReference>
<dbReference type="PANTHER" id="PTHR11806:SF0">
    <property type="entry name" value="PROTEIN MTO1 HOMOLOG, MITOCHONDRIAL"/>
    <property type="match status" value="1"/>
</dbReference>
<dbReference type="Pfam" id="PF01134">
    <property type="entry name" value="GIDA"/>
    <property type="match status" value="1"/>
</dbReference>
<dbReference type="Pfam" id="PF21680">
    <property type="entry name" value="GIDA_C_1st"/>
    <property type="match status" value="1"/>
</dbReference>
<dbReference type="Pfam" id="PF13932">
    <property type="entry name" value="SAM_GIDA_C"/>
    <property type="match status" value="1"/>
</dbReference>
<dbReference type="SMART" id="SM01228">
    <property type="entry name" value="GIDA_assoc_3"/>
    <property type="match status" value="1"/>
</dbReference>
<dbReference type="SUPFAM" id="SSF51905">
    <property type="entry name" value="FAD/NAD(P)-binding domain"/>
    <property type="match status" value="1"/>
</dbReference>
<dbReference type="PROSITE" id="PS01280">
    <property type="entry name" value="GIDA_1"/>
    <property type="match status" value="1"/>
</dbReference>
<dbReference type="PROSITE" id="PS01281">
    <property type="entry name" value="GIDA_2"/>
    <property type="match status" value="1"/>
</dbReference>
<sequence length="611" mass="69486">MFVKQYDVIVVGGGHSGSEAALAASNLGSNTLLITTNLYNIGQMSCNPAMGGIAKGQMIKEIDALGGYSGIITDKSMIQFRMLNKSKGPAMWSPRAQCDRLKFSKEWRLTLEKKKNLSFFQSTVVDLIIKNYKVIGVKTILGIYIKSKSVILTNGTFLNGIIHIGDKKNSGGRISENSVKGLTEKLKKIGFFSGRMKTGTSPRLDGRSLDFSKMIEQLGDFPIEPFSYLSNLNILKQKKCYITHTNLETHNLLSKEFNRSPIFNGKIKCVGPRYCPSIEEKVYRFSNKENHQIFVEPEGVNTIEVYINGFSTSMPEEVQYKALLTIPGFEHAKMVRPGYAIEYDYFPPTQLKNNLETKLIENLFFAGQINGTTGYEEAAAQGLIAGINANLKINEKDPFILKRNEAYIGVLIDDLIYKGTEEPYRMFTSRAEYRILLRQDNADERLTHMGINLGLVSYDRIKKLKNKNKNKKQCFLFFKINKANNLILKENIKICDLLSRPEISIYDIIKLSLIKNFIKKNNIDKKILEQISLYIKYKGYLLKEEENVKKMYRLETIRIPNDFDYNQVKSISIEAREKLLNYKPNSIGEASRISGVSPSDIRILILFLIKK</sequence>
<gene>
    <name evidence="1" type="primary">mnmG</name>
    <name evidence="1" type="synonym">gidA</name>
    <name type="ordered locus">SMGWSS_024</name>
</gene>
<reference key="1">
    <citation type="journal article" date="2007" name="Proc. Natl. Acad. Sci. U.S.A.">
        <title>Parallel genomic evolution and metabolic interdependence in an ancient symbiosis.</title>
        <authorList>
            <person name="McCutcheon J.P."/>
            <person name="Moran N.A."/>
        </authorList>
    </citation>
    <scope>NUCLEOTIDE SEQUENCE [LARGE SCALE GENOMIC DNA]</scope>
    <source>
        <strain>GWSS</strain>
    </source>
</reference>
<accession>A8Z5Q4</accession>
<comment type="function">
    <text evidence="1">NAD-binding protein involved in the addition of a carboxymethylaminomethyl (cmnm) group at the wobble position (U34) of certain tRNAs, forming tRNA-cmnm(5)s(2)U34.</text>
</comment>
<comment type="cofactor">
    <cofactor evidence="1">
        <name>FAD</name>
        <dbReference type="ChEBI" id="CHEBI:57692"/>
    </cofactor>
</comment>
<comment type="subunit">
    <text evidence="1">Homodimer. Heterotetramer of two MnmE and two MnmG subunits.</text>
</comment>
<comment type="subcellular location">
    <subcellularLocation>
        <location evidence="1">Cytoplasm</location>
    </subcellularLocation>
</comment>
<comment type="similarity">
    <text evidence="1">Belongs to the MnmG family.</text>
</comment>